<reference key="1">
    <citation type="journal article" date="2005" name="Science">
        <title>The transcriptional landscape of the mammalian genome.</title>
        <authorList>
            <person name="Carninci P."/>
            <person name="Kasukawa T."/>
            <person name="Katayama S."/>
            <person name="Gough J."/>
            <person name="Frith M.C."/>
            <person name="Maeda N."/>
            <person name="Oyama R."/>
            <person name="Ravasi T."/>
            <person name="Lenhard B."/>
            <person name="Wells C."/>
            <person name="Kodzius R."/>
            <person name="Shimokawa K."/>
            <person name="Bajic V.B."/>
            <person name="Brenner S.E."/>
            <person name="Batalov S."/>
            <person name="Forrest A.R."/>
            <person name="Zavolan M."/>
            <person name="Davis M.J."/>
            <person name="Wilming L.G."/>
            <person name="Aidinis V."/>
            <person name="Allen J.E."/>
            <person name="Ambesi-Impiombato A."/>
            <person name="Apweiler R."/>
            <person name="Aturaliya R.N."/>
            <person name="Bailey T.L."/>
            <person name="Bansal M."/>
            <person name="Baxter L."/>
            <person name="Beisel K.W."/>
            <person name="Bersano T."/>
            <person name="Bono H."/>
            <person name="Chalk A.M."/>
            <person name="Chiu K.P."/>
            <person name="Choudhary V."/>
            <person name="Christoffels A."/>
            <person name="Clutterbuck D.R."/>
            <person name="Crowe M.L."/>
            <person name="Dalla E."/>
            <person name="Dalrymple B.P."/>
            <person name="de Bono B."/>
            <person name="Della Gatta G."/>
            <person name="di Bernardo D."/>
            <person name="Down T."/>
            <person name="Engstrom P."/>
            <person name="Fagiolini M."/>
            <person name="Faulkner G."/>
            <person name="Fletcher C.F."/>
            <person name="Fukushima T."/>
            <person name="Furuno M."/>
            <person name="Futaki S."/>
            <person name="Gariboldi M."/>
            <person name="Georgii-Hemming P."/>
            <person name="Gingeras T.R."/>
            <person name="Gojobori T."/>
            <person name="Green R.E."/>
            <person name="Gustincich S."/>
            <person name="Harbers M."/>
            <person name="Hayashi Y."/>
            <person name="Hensch T.K."/>
            <person name="Hirokawa N."/>
            <person name="Hill D."/>
            <person name="Huminiecki L."/>
            <person name="Iacono M."/>
            <person name="Ikeo K."/>
            <person name="Iwama A."/>
            <person name="Ishikawa T."/>
            <person name="Jakt M."/>
            <person name="Kanapin A."/>
            <person name="Katoh M."/>
            <person name="Kawasawa Y."/>
            <person name="Kelso J."/>
            <person name="Kitamura H."/>
            <person name="Kitano H."/>
            <person name="Kollias G."/>
            <person name="Krishnan S.P."/>
            <person name="Kruger A."/>
            <person name="Kummerfeld S.K."/>
            <person name="Kurochkin I.V."/>
            <person name="Lareau L.F."/>
            <person name="Lazarevic D."/>
            <person name="Lipovich L."/>
            <person name="Liu J."/>
            <person name="Liuni S."/>
            <person name="McWilliam S."/>
            <person name="Madan Babu M."/>
            <person name="Madera M."/>
            <person name="Marchionni L."/>
            <person name="Matsuda H."/>
            <person name="Matsuzawa S."/>
            <person name="Miki H."/>
            <person name="Mignone F."/>
            <person name="Miyake S."/>
            <person name="Morris K."/>
            <person name="Mottagui-Tabar S."/>
            <person name="Mulder N."/>
            <person name="Nakano N."/>
            <person name="Nakauchi H."/>
            <person name="Ng P."/>
            <person name="Nilsson R."/>
            <person name="Nishiguchi S."/>
            <person name="Nishikawa S."/>
            <person name="Nori F."/>
            <person name="Ohara O."/>
            <person name="Okazaki Y."/>
            <person name="Orlando V."/>
            <person name="Pang K.C."/>
            <person name="Pavan W.J."/>
            <person name="Pavesi G."/>
            <person name="Pesole G."/>
            <person name="Petrovsky N."/>
            <person name="Piazza S."/>
            <person name="Reed J."/>
            <person name="Reid J.F."/>
            <person name="Ring B.Z."/>
            <person name="Ringwald M."/>
            <person name="Rost B."/>
            <person name="Ruan Y."/>
            <person name="Salzberg S.L."/>
            <person name="Sandelin A."/>
            <person name="Schneider C."/>
            <person name="Schoenbach C."/>
            <person name="Sekiguchi K."/>
            <person name="Semple C.A."/>
            <person name="Seno S."/>
            <person name="Sessa L."/>
            <person name="Sheng Y."/>
            <person name="Shibata Y."/>
            <person name="Shimada H."/>
            <person name="Shimada K."/>
            <person name="Silva D."/>
            <person name="Sinclair B."/>
            <person name="Sperling S."/>
            <person name="Stupka E."/>
            <person name="Sugiura K."/>
            <person name="Sultana R."/>
            <person name="Takenaka Y."/>
            <person name="Taki K."/>
            <person name="Tammoja K."/>
            <person name="Tan S.L."/>
            <person name="Tang S."/>
            <person name="Taylor M.S."/>
            <person name="Tegner J."/>
            <person name="Teichmann S.A."/>
            <person name="Ueda H.R."/>
            <person name="van Nimwegen E."/>
            <person name="Verardo R."/>
            <person name="Wei C.L."/>
            <person name="Yagi K."/>
            <person name="Yamanishi H."/>
            <person name="Zabarovsky E."/>
            <person name="Zhu S."/>
            <person name="Zimmer A."/>
            <person name="Hide W."/>
            <person name="Bult C."/>
            <person name="Grimmond S.M."/>
            <person name="Teasdale R.D."/>
            <person name="Liu E.T."/>
            <person name="Brusic V."/>
            <person name="Quackenbush J."/>
            <person name="Wahlestedt C."/>
            <person name="Mattick J.S."/>
            <person name="Hume D.A."/>
            <person name="Kai C."/>
            <person name="Sasaki D."/>
            <person name="Tomaru Y."/>
            <person name="Fukuda S."/>
            <person name="Kanamori-Katayama M."/>
            <person name="Suzuki M."/>
            <person name="Aoki J."/>
            <person name="Arakawa T."/>
            <person name="Iida J."/>
            <person name="Imamura K."/>
            <person name="Itoh M."/>
            <person name="Kato T."/>
            <person name="Kawaji H."/>
            <person name="Kawagashira N."/>
            <person name="Kawashima T."/>
            <person name="Kojima M."/>
            <person name="Kondo S."/>
            <person name="Konno H."/>
            <person name="Nakano K."/>
            <person name="Ninomiya N."/>
            <person name="Nishio T."/>
            <person name="Okada M."/>
            <person name="Plessy C."/>
            <person name="Shibata K."/>
            <person name="Shiraki T."/>
            <person name="Suzuki S."/>
            <person name="Tagami M."/>
            <person name="Waki K."/>
            <person name="Watahiki A."/>
            <person name="Okamura-Oho Y."/>
            <person name="Suzuki H."/>
            <person name="Kawai J."/>
            <person name="Hayashizaki Y."/>
        </authorList>
    </citation>
    <scope>NUCLEOTIDE SEQUENCE [LARGE SCALE MRNA]</scope>
    <source>
        <strain>C57BL/6J</strain>
        <tissue>Bone marrow</tissue>
        <tissue>Cerebellum</tissue>
        <tissue>Lung</tissue>
    </source>
</reference>
<reference key="2">
    <citation type="journal article" date="2009" name="PLoS Biol.">
        <title>Lineage-specific biology revealed by a finished genome assembly of the mouse.</title>
        <authorList>
            <person name="Church D.M."/>
            <person name="Goodstadt L."/>
            <person name="Hillier L.W."/>
            <person name="Zody M.C."/>
            <person name="Goldstein S."/>
            <person name="She X."/>
            <person name="Bult C.J."/>
            <person name="Agarwala R."/>
            <person name="Cherry J.L."/>
            <person name="DiCuccio M."/>
            <person name="Hlavina W."/>
            <person name="Kapustin Y."/>
            <person name="Meric P."/>
            <person name="Maglott D."/>
            <person name="Birtle Z."/>
            <person name="Marques A.C."/>
            <person name="Graves T."/>
            <person name="Zhou S."/>
            <person name="Teague B."/>
            <person name="Potamousis K."/>
            <person name="Churas C."/>
            <person name="Place M."/>
            <person name="Herschleb J."/>
            <person name="Runnheim R."/>
            <person name="Forrest D."/>
            <person name="Amos-Landgraf J."/>
            <person name="Schwartz D.C."/>
            <person name="Cheng Z."/>
            <person name="Lindblad-Toh K."/>
            <person name="Eichler E.E."/>
            <person name="Ponting C.P."/>
        </authorList>
    </citation>
    <scope>NUCLEOTIDE SEQUENCE [LARGE SCALE GENOMIC DNA]</scope>
    <source>
        <strain>C57BL/6J</strain>
    </source>
</reference>
<reference key="3">
    <citation type="journal article" date="2004" name="Genome Res.">
        <title>The status, quality, and expansion of the NIH full-length cDNA project: the Mammalian Gene Collection (MGC).</title>
        <authorList>
            <consortium name="The MGC Project Team"/>
        </authorList>
    </citation>
    <scope>NUCLEOTIDE SEQUENCE [LARGE SCALE MRNA]</scope>
    <source>
        <tissue>Brain</tissue>
    </source>
</reference>
<sequence length="363" mass="39967">MNRAPLKRSRILRMALTGVSAVSEESESGNKPFLLRALQIALVVSLYWVTSISMVFLNKYLLDSPSLQLDTPIFVTFYQCLVTSLLCKGLSTLATCCPGMVDFPTLNLDLKVARSVLPLSVVFIGMITFNNLCLKYVGVPFYNVGRSLTTVFNVLLSYLLLKQTTSFYALLTCGVIIGGFWLGIDQEGAEGTLSLTGTIFGVLASLCVSLNAIYTKKVLPAVDHSIWRLTFYNNVNACVLFLPLMIVLGELRALLAFTHLSSAHFWLMMTLGGLFGFAIGYVTGLQIKFTSPLTHNVSGTAKACAQTVLAVLYYEEIKSFLWWTSNLMVLGGSSAYTWVRGWEMQKTQEDPSSKDGEKSAIRV</sequence>
<comment type="function">
    <text evidence="1">Antiporter specific for GDP-l-fucose and depending on the concomitant reverse transport of GMP. Involved in GDP-fucose import from the cytoplasm into the Golgi lumen.</text>
</comment>
<comment type="catalytic activity">
    <reaction evidence="1">
        <text>GMP(out) + GDP-beta-L-fucose(in) = GMP(in) + GDP-beta-L-fucose(out)</text>
        <dbReference type="Rhea" id="RHEA:72707"/>
        <dbReference type="ChEBI" id="CHEBI:57273"/>
        <dbReference type="ChEBI" id="CHEBI:58115"/>
    </reaction>
</comment>
<comment type="subcellular location">
    <subcellularLocation>
        <location evidence="1">Golgi apparatus membrane</location>
        <topology evidence="2">Multi-pass membrane protein</topology>
    </subcellularLocation>
</comment>
<comment type="similarity">
    <text evidence="3">Belongs to the TPT transporter family. SLC35C subfamily.</text>
</comment>
<organism>
    <name type="scientific">Mus musculus</name>
    <name type="common">Mouse</name>
    <dbReference type="NCBI Taxonomy" id="10090"/>
    <lineage>
        <taxon>Eukaryota</taxon>
        <taxon>Metazoa</taxon>
        <taxon>Chordata</taxon>
        <taxon>Craniata</taxon>
        <taxon>Vertebrata</taxon>
        <taxon>Euteleostomi</taxon>
        <taxon>Mammalia</taxon>
        <taxon>Eutheria</taxon>
        <taxon>Euarchontoglires</taxon>
        <taxon>Glires</taxon>
        <taxon>Rodentia</taxon>
        <taxon>Myomorpha</taxon>
        <taxon>Muroidea</taxon>
        <taxon>Muridae</taxon>
        <taxon>Murinae</taxon>
        <taxon>Mus</taxon>
        <taxon>Mus</taxon>
    </lineage>
</organism>
<accession>Q8BLX4</accession>
<accession>Q3UMP5</accession>
<accession>Q8BV24</accession>
<name>FUCT1_MOUSE</name>
<proteinExistence type="evidence at transcript level"/>
<protein>
    <recommendedName>
        <fullName>GDP-fucose transporter 1</fullName>
    </recommendedName>
    <alternativeName>
        <fullName>Solute carrier family 35 member C1</fullName>
    </alternativeName>
</protein>
<feature type="chain" id="PRO_0000343221" description="GDP-fucose transporter 1">
    <location>
        <begin position="1"/>
        <end position="363"/>
    </location>
</feature>
<feature type="transmembrane region" description="Helical" evidence="2">
    <location>
        <begin position="33"/>
        <end position="55"/>
    </location>
</feature>
<feature type="transmembrane region" description="Helical" evidence="2">
    <location>
        <begin position="75"/>
        <end position="97"/>
    </location>
</feature>
<feature type="transmembrane region" description="Helical" evidence="2">
    <location>
        <begin position="110"/>
        <end position="129"/>
    </location>
</feature>
<feature type="transmembrane region" description="Helical" evidence="2">
    <location>
        <begin position="139"/>
        <end position="161"/>
    </location>
</feature>
<feature type="transmembrane region" description="Helical" evidence="2">
    <location>
        <begin position="166"/>
        <end position="184"/>
    </location>
</feature>
<feature type="transmembrane region" description="Helical" evidence="2">
    <location>
        <begin position="194"/>
        <end position="213"/>
    </location>
</feature>
<feature type="transmembrane region" description="Helical" evidence="2">
    <location>
        <begin position="226"/>
        <end position="248"/>
    </location>
</feature>
<feature type="transmembrane region" description="Helical" evidence="2">
    <location>
        <begin position="263"/>
        <end position="285"/>
    </location>
</feature>
<feature type="sequence conflict" description="In Ref. 1; BAC38127." evidence="3" ref="1">
    <original>V</original>
    <variation>G</variation>
    <location>
        <position position="43"/>
    </location>
</feature>
<feature type="sequence conflict" description="In Ref. 1; BAE26053." evidence="3" ref="1">
    <original>L</original>
    <variation>V</variation>
    <location>
        <position position="110"/>
    </location>
</feature>
<gene>
    <name type="primary">Slc35c1</name>
    <name type="synonym">Fuct1</name>
</gene>
<keyword id="KW-0333">Golgi apparatus</keyword>
<keyword id="KW-0472">Membrane</keyword>
<keyword id="KW-1185">Reference proteome</keyword>
<keyword id="KW-0762">Sugar transport</keyword>
<keyword id="KW-0812">Transmembrane</keyword>
<keyword id="KW-1133">Transmembrane helix</keyword>
<keyword id="KW-0813">Transport</keyword>
<dbReference type="EMBL" id="AK040986">
    <property type="protein sequence ID" value="BAC30770.1"/>
    <property type="molecule type" value="mRNA"/>
</dbReference>
<dbReference type="EMBL" id="AK081068">
    <property type="protein sequence ID" value="BAC38127.1"/>
    <property type="molecule type" value="mRNA"/>
</dbReference>
<dbReference type="EMBL" id="AK144762">
    <property type="protein sequence ID" value="BAE26053.1"/>
    <property type="molecule type" value="mRNA"/>
</dbReference>
<dbReference type="EMBL" id="AK151154">
    <property type="protein sequence ID" value="BAE30160.1"/>
    <property type="molecule type" value="mRNA"/>
</dbReference>
<dbReference type="EMBL" id="AL683814">
    <property type="status" value="NOT_ANNOTATED_CDS"/>
    <property type="molecule type" value="Genomic_DNA"/>
</dbReference>
<dbReference type="EMBL" id="BC116736">
    <property type="protein sequence ID" value="AAI16737.1"/>
    <property type="molecule type" value="mRNA"/>
</dbReference>
<dbReference type="EMBL" id="BC119128">
    <property type="protein sequence ID" value="AAI19129.1"/>
    <property type="molecule type" value="mRNA"/>
</dbReference>
<dbReference type="CCDS" id="CCDS16448.1"/>
<dbReference type="RefSeq" id="NP_997597.1">
    <property type="nucleotide sequence ID" value="NM_211358.2"/>
</dbReference>
<dbReference type="SMR" id="Q8BLX4"/>
<dbReference type="BioGRID" id="230730">
    <property type="interactions" value="1"/>
</dbReference>
<dbReference type="FunCoup" id="Q8BLX4">
    <property type="interactions" value="786"/>
</dbReference>
<dbReference type="STRING" id="10090.ENSMUSP00000063461"/>
<dbReference type="iPTMnet" id="Q8BLX4"/>
<dbReference type="PhosphoSitePlus" id="Q8BLX4"/>
<dbReference type="SwissPalm" id="Q8BLX4"/>
<dbReference type="PaxDb" id="10090-ENSMUSP00000063461"/>
<dbReference type="ProteomicsDB" id="271810"/>
<dbReference type="Antibodypedia" id="13252">
    <property type="antibodies" value="58 antibodies from 19 providers"/>
</dbReference>
<dbReference type="DNASU" id="228368"/>
<dbReference type="Ensembl" id="ENSMUST00000067631.7">
    <property type="protein sequence ID" value="ENSMUSP00000063461.7"/>
    <property type="gene ID" value="ENSMUSG00000049922.9"/>
</dbReference>
<dbReference type="GeneID" id="228368"/>
<dbReference type="KEGG" id="mmu:228368"/>
<dbReference type="UCSC" id="uc008kyb.1">
    <property type="organism name" value="mouse"/>
</dbReference>
<dbReference type="AGR" id="MGI:2443301"/>
<dbReference type="CTD" id="55343"/>
<dbReference type="MGI" id="MGI:2443301">
    <property type="gene designation" value="Slc35c1"/>
</dbReference>
<dbReference type="VEuPathDB" id="HostDB:ENSMUSG00000049922"/>
<dbReference type="eggNOG" id="KOG1442">
    <property type="taxonomic scope" value="Eukaryota"/>
</dbReference>
<dbReference type="GeneTree" id="ENSGT00390000013315"/>
<dbReference type="InParanoid" id="Q8BLX4"/>
<dbReference type="OMA" id="WWTSNIV"/>
<dbReference type="OrthoDB" id="5547497at2759"/>
<dbReference type="PhylomeDB" id="Q8BLX4"/>
<dbReference type="TreeFam" id="TF354269"/>
<dbReference type="Reactome" id="R-MMU-6787639">
    <property type="pathway name" value="GDP-fucose biosynthesis"/>
</dbReference>
<dbReference type="Reactome" id="R-MMU-727802">
    <property type="pathway name" value="Transport of nucleotide sugars"/>
</dbReference>
<dbReference type="BioGRID-ORCS" id="228368">
    <property type="hits" value="3 hits in 78 CRISPR screens"/>
</dbReference>
<dbReference type="ChiTaRS" id="Slc35c1">
    <property type="organism name" value="mouse"/>
</dbReference>
<dbReference type="PRO" id="PR:Q8BLX4"/>
<dbReference type="Proteomes" id="UP000000589">
    <property type="component" value="Chromosome 2"/>
</dbReference>
<dbReference type="RNAct" id="Q8BLX4">
    <property type="molecule type" value="protein"/>
</dbReference>
<dbReference type="Bgee" id="ENSMUSG00000049922">
    <property type="expression patterns" value="Expressed in dorsal pancreas and 222 other cell types or tissues"/>
</dbReference>
<dbReference type="ExpressionAtlas" id="Q8BLX4">
    <property type="expression patterns" value="baseline and differential"/>
</dbReference>
<dbReference type="GO" id="GO:0000139">
    <property type="term" value="C:Golgi membrane"/>
    <property type="evidence" value="ECO:0000315"/>
    <property type="project" value="MGI"/>
</dbReference>
<dbReference type="GO" id="GO:0005457">
    <property type="term" value="F:GDP-fucose transmembrane transporter activity"/>
    <property type="evidence" value="ECO:0000315"/>
    <property type="project" value="MGI"/>
</dbReference>
<dbReference type="GO" id="GO:0042351">
    <property type="term" value="P:'de novo' GDP-L-fucose biosynthetic process"/>
    <property type="evidence" value="ECO:0000315"/>
    <property type="project" value="MGI"/>
</dbReference>
<dbReference type="GO" id="GO:0036085">
    <property type="term" value="P:GDP-fucose import into Golgi lumen"/>
    <property type="evidence" value="ECO:0000250"/>
    <property type="project" value="UniProtKB"/>
</dbReference>
<dbReference type="GO" id="GO:0042352">
    <property type="term" value="P:GDP-L-fucose salvage"/>
    <property type="evidence" value="ECO:0000315"/>
    <property type="project" value="MGI"/>
</dbReference>
<dbReference type="GO" id="GO:0030259">
    <property type="term" value="P:lipid glycosylation"/>
    <property type="evidence" value="ECO:0000315"/>
    <property type="project" value="MGI"/>
</dbReference>
<dbReference type="GO" id="GO:0045746">
    <property type="term" value="P:negative regulation of Notch signaling pathway"/>
    <property type="evidence" value="ECO:0000315"/>
    <property type="project" value="MGI"/>
</dbReference>
<dbReference type="InterPro" id="IPR004853">
    <property type="entry name" value="Sugar_P_trans_dom"/>
</dbReference>
<dbReference type="InterPro" id="IPR050186">
    <property type="entry name" value="TPT_transporter"/>
</dbReference>
<dbReference type="PANTHER" id="PTHR11132">
    <property type="entry name" value="SOLUTE CARRIER FAMILY 35"/>
    <property type="match status" value="1"/>
</dbReference>
<dbReference type="Pfam" id="PF03151">
    <property type="entry name" value="TPT"/>
    <property type="match status" value="1"/>
</dbReference>
<evidence type="ECO:0000250" key="1">
    <source>
        <dbReference type="UniProtKB" id="Q96A29"/>
    </source>
</evidence>
<evidence type="ECO:0000255" key="2"/>
<evidence type="ECO:0000305" key="3"/>